<comment type="function">
    <text evidence="1">Component of the ATAC complex, a complex with histone acetyltransferase activity on histones H3 and H4. May function as a scaffold for the ATAC complex to promote ATAC complex stability. Has also weak histone acetyltransferase activity toward histone H4. Required for the normal progression through G1 and G2/M phases of the cell cycle (By similarity).</text>
</comment>
<comment type="subunit">
    <text evidence="1">Interacts with the LIM 1 domain of CSRP2. Component of the ADA2A-containing complex (ATAC), composed of CSRP2BP, KAT2A, TADA2L, TADA3L, ZZ3, MBIP, WDR5, YEATS2, CCDC101 and DR1. In the complex, it probably interacts directly with KAT2A, MBIP and WDR5.</text>
</comment>
<comment type="subcellular location">
    <subcellularLocation>
        <location evidence="1">Nucleus</location>
    </subcellularLocation>
    <subcellularLocation>
        <location evidence="1">Cytoplasm</location>
    </subcellularLocation>
    <text evidence="1">Mainly nuclear.</text>
</comment>
<comment type="disruption phenotype">
    <text evidence="5">Early embryonic lethality. Severe growth retardation, increased apoptosis, and alterations in the cell cycle.</text>
</comment>
<reference key="1">
    <citation type="journal article" date="2009" name="PLoS Biol.">
        <title>Lineage-specific biology revealed by a finished genome assembly of the mouse.</title>
        <authorList>
            <person name="Church D.M."/>
            <person name="Goodstadt L."/>
            <person name="Hillier L.W."/>
            <person name="Zody M.C."/>
            <person name="Goldstein S."/>
            <person name="She X."/>
            <person name="Bult C.J."/>
            <person name="Agarwala R."/>
            <person name="Cherry J.L."/>
            <person name="DiCuccio M."/>
            <person name="Hlavina W."/>
            <person name="Kapustin Y."/>
            <person name="Meric P."/>
            <person name="Maglott D."/>
            <person name="Birtle Z."/>
            <person name="Marques A.C."/>
            <person name="Graves T."/>
            <person name="Zhou S."/>
            <person name="Teague B."/>
            <person name="Potamousis K."/>
            <person name="Churas C."/>
            <person name="Place M."/>
            <person name="Herschleb J."/>
            <person name="Runnheim R."/>
            <person name="Forrest D."/>
            <person name="Amos-Landgraf J."/>
            <person name="Schwartz D.C."/>
            <person name="Cheng Z."/>
            <person name="Lindblad-Toh K."/>
            <person name="Eichler E.E."/>
            <person name="Ponting C.P."/>
        </authorList>
    </citation>
    <scope>NUCLEOTIDE SEQUENCE [LARGE SCALE GENOMIC DNA]</scope>
    <source>
        <strain>C57BL/6J</strain>
    </source>
</reference>
<reference key="2">
    <citation type="journal article" date="2004" name="Genome Res.">
        <title>The status, quality, and expansion of the NIH full-length cDNA project: the Mammalian Gene Collection (MGC).</title>
        <authorList>
            <consortium name="The MGC Project Team"/>
        </authorList>
    </citation>
    <scope>NUCLEOTIDE SEQUENCE [LARGE SCALE MRNA]</scope>
    <source>
        <strain>FVB/N</strain>
        <tissue>Mammary tumor</tissue>
    </source>
</reference>
<reference key="3">
    <citation type="journal article" date="2009" name="Mol. Cell. Biol.">
        <title>The double-histone-acetyltransferase complex ATAC is essential for mammalian development.</title>
        <authorList>
            <person name="Guelman S."/>
            <person name="Kozuka K."/>
            <person name="Mao Y."/>
            <person name="Pham V."/>
            <person name="Solloway M.J."/>
            <person name="Wang J."/>
            <person name="Wu J."/>
            <person name="Lill J.R."/>
            <person name="Zha J."/>
        </authorList>
    </citation>
    <scope>DISRUPTION PHENOTYPE</scope>
</reference>
<reference key="4">
    <citation type="journal article" date="2013" name="Mol. Cell">
        <title>SIRT5-mediated lysine desuccinylation impacts diverse metabolic pathways.</title>
        <authorList>
            <person name="Park J."/>
            <person name="Chen Y."/>
            <person name="Tishkoff D.X."/>
            <person name="Peng C."/>
            <person name="Tan M."/>
            <person name="Dai L."/>
            <person name="Xie Z."/>
            <person name="Zhang Y."/>
            <person name="Zwaans B.M."/>
            <person name="Skinner M.E."/>
            <person name="Lombard D.B."/>
            <person name="Zhao Y."/>
        </authorList>
    </citation>
    <scope>ACETYLATION [LARGE SCALE ANALYSIS] AT LYS-230 AND LYS-291</scope>
    <scope>IDENTIFICATION BY MASS SPECTROMETRY [LARGE SCALE ANALYSIS]</scope>
    <source>
        <tissue>Embryonic fibroblast</tissue>
    </source>
</reference>
<sequence>MDSSIHLSGLLSRHDDDATRTSTSEGLEEGEVEGETLLIVESEDQASVDLSHDQSGDSLNSDEGDVSWMEEQLSYFCDKCQKWIPASQLREQLSYLKGDNFFRFTCCDCSADGKEQYERLKLTWQQVVMLAMYNLSLEGSGRQGYFRWKEDICAFIEKHWTFLLGNRKKTSTWWSTVAGCLSVGSPVYFRSGAQEFGEPGWWKLVHNRPPTMRPEGEKLAASTLKVKASKPTLDPIITVEGLRKRASRNPVESAMELKEKRSRTQEAKDIRRAQKEAAGLLDRSTSSTPVKFISRGRRPDLILEKGEVIDFSSLSSSDRTPLTSPSPSPSLDFSAPGTPASHSATPSLLSEADLIPDVMPPQALFHDDDELEGDGVIDPGMEYIPPPAGSASGLLGSRKKVRAPEQIKQEVDSEEEKPDRMDGDSEDTDSNISLHTRAREKRKPPLEKDMKPKGPRYTPVSIYEEKLLLKRLEACPGAVAMTPEARRLKRKLIVRQAKRDRGLPLFDLDEVVNAALLLVDGIYGAKDGGASRLAAGQATYRTTCQDFRILDRYQTALPARKGFRHQTTRFLYRLVGSEDLAVDQSIISPYTSRILKPYIRRDYETKPPKLQLLSQIRSHLHRSDPHWTPGPDAPLDYCYVRPNHIPTINSMCQEFFWPGIDLSECLQYPDFSVVVLYKKVIVAFGFMVPDVKYNEAYISFLLVHPEWRRAGIATFMIYHLIQTCMGKDVTLHVSASNPAMLLYQKFGFKTEEYVLDFYDKYYPLESTECKHAFFLRLRR</sequence>
<gene>
    <name evidence="2" type="primary">Kat14</name>
    <name type="synonym">Csrp2bp</name>
</gene>
<evidence type="ECO:0000250" key="1"/>
<evidence type="ECO:0000250" key="2">
    <source>
        <dbReference type="UniProtKB" id="Q9H8E8"/>
    </source>
</evidence>
<evidence type="ECO:0000255" key="3">
    <source>
        <dbReference type="PROSITE-ProRule" id="PRU00532"/>
    </source>
</evidence>
<evidence type="ECO:0000256" key="4">
    <source>
        <dbReference type="SAM" id="MobiDB-lite"/>
    </source>
</evidence>
<evidence type="ECO:0000269" key="5">
    <source>
    </source>
</evidence>
<evidence type="ECO:0000305" key="6"/>
<evidence type="ECO:0007744" key="7">
    <source>
    </source>
</evidence>
<keyword id="KW-0007">Acetylation</keyword>
<keyword id="KW-0963">Cytoplasm</keyword>
<keyword id="KW-0539">Nucleus</keyword>
<keyword id="KW-0597">Phosphoprotein</keyword>
<keyword id="KW-1185">Reference proteome</keyword>
<proteinExistence type="evidence at protein level"/>
<dbReference type="EMBL" id="AL808123">
    <property type="status" value="NOT_ANNOTATED_CDS"/>
    <property type="molecule type" value="Genomic_DNA"/>
</dbReference>
<dbReference type="EMBL" id="BC031563">
    <property type="protein sequence ID" value="AAH31563.1"/>
    <property type="molecule type" value="mRNA"/>
</dbReference>
<dbReference type="CCDS" id="CCDS16819.1"/>
<dbReference type="RefSeq" id="NP_852082.2">
    <property type="nucleotide sequence ID" value="NM_181417.3"/>
</dbReference>
<dbReference type="SMR" id="Q8CID0"/>
<dbReference type="BioGRID" id="230756">
    <property type="interactions" value="10"/>
</dbReference>
<dbReference type="ComplexPortal" id="CPX-1025">
    <property type="entry name" value="GCN5-containing ATAC complex"/>
</dbReference>
<dbReference type="ComplexPortal" id="CPX-1029">
    <property type="entry name" value="PCAF-containing ATAC complex"/>
</dbReference>
<dbReference type="FunCoup" id="Q8CID0">
    <property type="interactions" value="2085"/>
</dbReference>
<dbReference type="IntAct" id="Q8CID0">
    <property type="interactions" value="3"/>
</dbReference>
<dbReference type="MINT" id="Q8CID0"/>
<dbReference type="STRING" id="10090.ENSMUSP00000028911"/>
<dbReference type="GlyGen" id="Q8CID0">
    <property type="glycosylation" value="2 sites"/>
</dbReference>
<dbReference type="iPTMnet" id="Q8CID0"/>
<dbReference type="PhosphoSitePlus" id="Q8CID0"/>
<dbReference type="PaxDb" id="10090-ENSMUSP00000028911"/>
<dbReference type="ProteomicsDB" id="285211"/>
<dbReference type="Antibodypedia" id="24530">
    <property type="antibodies" value="155 antibodies from 23 providers"/>
</dbReference>
<dbReference type="DNASU" id="228714"/>
<dbReference type="Ensembl" id="ENSMUST00000028911.15">
    <property type="protein sequence ID" value="ENSMUSP00000028911.9"/>
    <property type="gene ID" value="ENSMUSG00000027425.19"/>
</dbReference>
<dbReference type="GeneID" id="228714"/>
<dbReference type="KEGG" id="mmu:228714"/>
<dbReference type="UCSC" id="uc008mqy.2">
    <property type="organism name" value="mouse"/>
</dbReference>
<dbReference type="AGR" id="MGI:1917264"/>
<dbReference type="CTD" id="57325"/>
<dbReference type="MGI" id="MGI:1917264">
    <property type="gene designation" value="Kat14"/>
</dbReference>
<dbReference type="VEuPathDB" id="HostDB:ENSMUSG00000027425"/>
<dbReference type="eggNOG" id="KOG3138">
    <property type="taxonomic scope" value="Eukaryota"/>
</dbReference>
<dbReference type="GeneTree" id="ENSGT00390000001146"/>
<dbReference type="HOGENOM" id="CLU_022855_0_0_1"/>
<dbReference type="InParanoid" id="Q8CID0"/>
<dbReference type="OMA" id="PRRNWPW"/>
<dbReference type="OrthoDB" id="4080456at2759"/>
<dbReference type="PhylomeDB" id="Q8CID0"/>
<dbReference type="TreeFam" id="TF324809"/>
<dbReference type="Reactome" id="R-MMU-9772755">
    <property type="pathway name" value="Formation of WDR5-containing histone-modifying complexes"/>
</dbReference>
<dbReference type="BioGRID-ORCS" id="228714">
    <property type="hits" value="7 hits in 77 CRISPR screens"/>
</dbReference>
<dbReference type="CD-CODE" id="01CA17F3">
    <property type="entry name" value="Centrosome"/>
</dbReference>
<dbReference type="ChiTaRS" id="Kat14">
    <property type="organism name" value="mouse"/>
</dbReference>
<dbReference type="PRO" id="PR:Q8CID0"/>
<dbReference type="Proteomes" id="UP000000589">
    <property type="component" value="Chromosome 2"/>
</dbReference>
<dbReference type="RNAct" id="Q8CID0">
    <property type="molecule type" value="protein"/>
</dbReference>
<dbReference type="Bgee" id="ENSMUSG00000027425">
    <property type="expression patterns" value="Expressed in primary oocyte and 221 other cell types or tissues"/>
</dbReference>
<dbReference type="ExpressionAtlas" id="Q8CID0">
    <property type="expression patterns" value="baseline and differential"/>
</dbReference>
<dbReference type="GO" id="GO:0140672">
    <property type="term" value="C:ATAC complex"/>
    <property type="evidence" value="ECO:0000314"/>
    <property type="project" value="ComplexPortal"/>
</dbReference>
<dbReference type="GO" id="GO:0005737">
    <property type="term" value="C:cytoplasm"/>
    <property type="evidence" value="ECO:0007669"/>
    <property type="project" value="UniProtKB-SubCell"/>
</dbReference>
<dbReference type="GO" id="GO:0072686">
    <property type="term" value="C:mitotic spindle"/>
    <property type="evidence" value="ECO:0000303"/>
    <property type="project" value="ComplexPortal"/>
</dbReference>
<dbReference type="GO" id="GO:0005634">
    <property type="term" value="C:nucleus"/>
    <property type="evidence" value="ECO:0000314"/>
    <property type="project" value="MGI"/>
</dbReference>
<dbReference type="GO" id="GO:0004402">
    <property type="term" value="F:histone acetyltransferase activity"/>
    <property type="evidence" value="ECO:0000266"/>
    <property type="project" value="MGI"/>
</dbReference>
<dbReference type="GO" id="GO:0000086">
    <property type="term" value="P:G2/M transition of mitotic cell cycle"/>
    <property type="evidence" value="ECO:0000315"/>
    <property type="project" value="MGI"/>
</dbReference>
<dbReference type="GO" id="GO:0051726">
    <property type="term" value="P:regulation of cell cycle"/>
    <property type="evidence" value="ECO:0000315"/>
    <property type="project" value="ComplexPortal"/>
</dbReference>
<dbReference type="GO" id="GO:0051302">
    <property type="term" value="P:regulation of cell division"/>
    <property type="evidence" value="ECO:0000314"/>
    <property type="project" value="ComplexPortal"/>
</dbReference>
<dbReference type="GO" id="GO:0006355">
    <property type="term" value="P:regulation of DNA-templated transcription"/>
    <property type="evidence" value="ECO:0000266"/>
    <property type="project" value="ComplexPortal"/>
</dbReference>
<dbReference type="GO" id="GO:0045995">
    <property type="term" value="P:regulation of embryonic development"/>
    <property type="evidence" value="ECO:0000314"/>
    <property type="project" value="ComplexPortal"/>
</dbReference>
<dbReference type="GO" id="GO:0006357">
    <property type="term" value="P:regulation of transcription by RNA polymerase II"/>
    <property type="evidence" value="ECO:0000266"/>
    <property type="project" value="ComplexPortal"/>
</dbReference>
<dbReference type="CDD" id="cd04301">
    <property type="entry name" value="NAT_SF"/>
    <property type="match status" value="1"/>
</dbReference>
<dbReference type="FunFam" id="3.90.980.20:FF:000004">
    <property type="entry name" value="Cysteine-rich protein 2-binding protein-like"/>
    <property type="match status" value="1"/>
</dbReference>
<dbReference type="FunFam" id="3.40.630.30:FF:000013">
    <property type="entry name" value="cysteine-rich protein 2-binding protein-like"/>
    <property type="match status" value="1"/>
</dbReference>
<dbReference type="Gene3D" id="3.40.630.30">
    <property type="match status" value="1"/>
</dbReference>
<dbReference type="Gene3D" id="3.90.980.20">
    <property type="match status" value="1"/>
</dbReference>
<dbReference type="InterPro" id="IPR016181">
    <property type="entry name" value="Acyl_CoA_acyltransferase"/>
</dbReference>
<dbReference type="InterPro" id="IPR000182">
    <property type="entry name" value="GNAT_dom"/>
</dbReference>
<dbReference type="PANTHER" id="PTHR20916">
    <property type="entry name" value="CYSTEINE AND GLYCINE-RICH PROTEIN 2 BINDING PROTEIN"/>
    <property type="match status" value="1"/>
</dbReference>
<dbReference type="PANTHER" id="PTHR20916:SF26">
    <property type="entry name" value="CYSTEINE-RICH PROTEIN 2-BINDING PROTEIN"/>
    <property type="match status" value="1"/>
</dbReference>
<dbReference type="Pfam" id="PF00583">
    <property type="entry name" value="Acetyltransf_1"/>
    <property type="match status" value="1"/>
</dbReference>
<dbReference type="SUPFAM" id="SSF55729">
    <property type="entry name" value="Acyl-CoA N-acyltransferases (Nat)"/>
    <property type="match status" value="1"/>
</dbReference>
<dbReference type="PROSITE" id="PS51186">
    <property type="entry name" value="GNAT"/>
    <property type="match status" value="1"/>
</dbReference>
<feature type="chain" id="PRO_0000304937" description="Cysteine-rich protein 2-binding protein">
    <location>
        <begin position="1"/>
        <end position="779"/>
    </location>
</feature>
<feature type="domain" description="N-acetyltransferase" evidence="3">
    <location>
        <begin position="635"/>
        <end position="779"/>
    </location>
</feature>
<feature type="region of interest" description="Disordered" evidence="4">
    <location>
        <begin position="1"/>
        <end position="34"/>
    </location>
</feature>
<feature type="region of interest" description="Disordered" evidence="4">
    <location>
        <begin position="247"/>
        <end position="292"/>
    </location>
</feature>
<feature type="region of interest" description="Disordered" evidence="4">
    <location>
        <begin position="314"/>
        <end position="345"/>
    </location>
</feature>
<feature type="region of interest" description="Disordered" evidence="4">
    <location>
        <begin position="360"/>
        <end position="457"/>
    </location>
</feature>
<feature type="compositionally biased region" description="Basic and acidic residues" evidence="4">
    <location>
        <begin position="255"/>
        <end position="275"/>
    </location>
</feature>
<feature type="compositionally biased region" description="Low complexity" evidence="4">
    <location>
        <begin position="314"/>
        <end position="334"/>
    </location>
</feature>
<feature type="compositionally biased region" description="Basic and acidic residues" evidence="4">
    <location>
        <begin position="402"/>
        <end position="423"/>
    </location>
</feature>
<feature type="compositionally biased region" description="Basic and acidic residues" evidence="4">
    <location>
        <begin position="443"/>
        <end position="452"/>
    </location>
</feature>
<feature type="modified residue" description="Phosphoserine" evidence="2">
    <location>
        <position position="4"/>
    </location>
</feature>
<feature type="modified residue" description="N6-acetyllysine" evidence="7">
    <location>
        <position position="230"/>
    </location>
</feature>
<feature type="modified residue" description="Phosphoserine" evidence="2">
    <location>
        <position position="284"/>
    </location>
</feature>
<feature type="modified residue" description="N6-acetyllysine" evidence="7">
    <location>
        <position position="291"/>
    </location>
</feature>
<feature type="modified residue" description="Phosphoserine" evidence="2">
    <location>
        <position position="413"/>
    </location>
</feature>
<feature type="sequence conflict" description="In Ref. 2; AAH31563." evidence="6" ref="2">
    <original>G</original>
    <variation>V</variation>
    <location>
        <position position="144"/>
    </location>
</feature>
<feature type="sequence conflict" description="In Ref. 2; AAH31563." evidence="6" ref="2">
    <original>A</original>
    <variation>L</variation>
    <location>
        <position position="497"/>
    </location>
</feature>
<protein>
    <recommendedName>
        <fullName>Cysteine-rich protein 2-binding protein</fullName>
        <shortName>CSRP2-binding protein</shortName>
    </recommendedName>
    <alternativeName>
        <fullName>ADA2A-containing complex subunit 2</fullName>
        <shortName>ATAC2</shortName>
    </alternativeName>
    <alternativeName>
        <fullName>CRP2-binding partner</fullName>
        <shortName>CRP2BP</shortName>
    </alternativeName>
    <alternativeName>
        <fullName evidence="2">Lysine acetyltransferase 14</fullName>
    </alternativeName>
</protein>
<accession>Q8CID0</accession>
<accession>A2ANA8</accession>
<organism>
    <name type="scientific">Mus musculus</name>
    <name type="common">Mouse</name>
    <dbReference type="NCBI Taxonomy" id="10090"/>
    <lineage>
        <taxon>Eukaryota</taxon>
        <taxon>Metazoa</taxon>
        <taxon>Chordata</taxon>
        <taxon>Craniata</taxon>
        <taxon>Vertebrata</taxon>
        <taxon>Euteleostomi</taxon>
        <taxon>Mammalia</taxon>
        <taxon>Eutheria</taxon>
        <taxon>Euarchontoglires</taxon>
        <taxon>Glires</taxon>
        <taxon>Rodentia</taxon>
        <taxon>Myomorpha</taxon>
        <taxon>Muroidea</taxon>
        <taxon>Muridae</taxon>
        <taxon>Murinae</taxon>
        <taxon>Mus</taxon>
        <taxon>Mus</taxon>
    </lineage>
</organism>
<name>CSR2B_MOUSE</name>